<protein>
    <recommendedName>
        <fullName evidence="1">Deoxyuridine 5'-triphosphate nucleotidohydrolase</fullName>
        <shortName evidence="1">dUTPase</shortName>
        <ecNumber evidence="1">3.6.1.23</ecNumber>
    </recommendedName>
    <alternativeName>
        <fullName evidence="1">dUTP pyrophosphatase</fullName>
    </alternativeName>
</protein>
<keyword id="KW-0378">Hydrolase</keyword>
<keyword id="KW-0460">Magnesium</keyword>
<keyword id="KW-0479">Metal-binding</keyword>
<keyword id="KW-0546">Nucleotide metabolism</keyword>
<proteinExistence type="inferred from homology"/>
<comment type="function">
    <text evidence="1">This enzyme is involved in nucleotide metabolism: it produces dUMP, the immediate precursor of thymidine nucleotides and it decreases the intracellular concentration of dUTP so that uracil cannot be incorporated into DNA.</text>
</comment>
<comment type="catalytic activity">
    <reaction evidence="1">
        <text>dUTP + H2O = dUMP + diphosphate + H(+)</text>
        <dbReference type="Rhea" id="RHEA:10248"/>
        <dbReference type="ChEBI" id="CHEBI:15377"/>
        <dbReference type="ChEBI" id="CHEBI:15378"/>
        <dbReference type="ChEBI" id="CHEBI:33019"/>
        <dbReference type="ChEBI" id="CHEBI:61555"/>
        <dbReference type="ChEBI" id="CHEBI:246422"/>
        <dbReference type="EC" id="3.6.1.23"/>
    </reaction>
</comment>
<comment type="cofactor">
    <cofactor evidence="1">
        <name>Mg(2+)</name>
        <dbReference type="ChEBI" id="CHEBI:18420"/>
    </cofactor>
</comment>
<comment type="pathway">
    <text evidence="1">Pyrimidine metabolism; dUMP biosynthesis; dUMP from dCTP (dUTP route): step 2/2.</text>
</comment>
<comment type="similarity">
    <text evidence="1">Belongs to the dUTPase family.</text>
</comment>
<sequence length="185" mass="19864">MSHLQAHMQRNNKESHSLSPFSQDSQHVTLPVECLEHGQGLELPHYATSGSAGLDLRAALAEEETVVLAPGQRALIPTGLVFHLLPGFEAQIRPRSGLALKHGITCLNTPGTIDSDYRGEIKILLINLGQENFSIQRGMRIAQTVIAPVVQVNVCAIEPDQKDSSQTPSNEGSRGADGFGSTGHD</sequence>
<organism>
    <name type="scientific">Bartonella quintana (strain Toulouse)</name>
    <name type="common">Rochalimaea quintana</name>
    <dbReference type="NCBI Taxonomy" id="283165"/>
    <lineage>
        <taxon>Bacteria</taxon>
        <taxon>Pseudomonadati</taxon>
        <taxon>Pseudomonadota</taxon>
        <taxon>Alphaproteobacteria</taxon>
        <taxon>Hyphomicrobiales</taxon>
        <taxon>Bartonellaceae</taxon>
        <taxon>Bartonella</taxon>
    </lineage>
</organism>
<accession>Q6FYR2</accession>
<feature type="chain" id="PRO_0000182828" description="Deoxyuridine 5'-triphosphate nucleotidohydrolase">
    <location>
        <begin position="1"/>
        <end position="185"/>
    </location>
</feature>
<feature type="region of interest" description="Disordered" evidence="2">
    <location>
        <begin position="1"/>
        <end position="23"/>
    </location>
</feature>
<feature type="region of interest" description="Disordered" evidence="2">
    <location>
        <begin position="160"/>
        <end position="185"/>
    </location>
</feature>
<feature type="compositionally biased region" description="Gly residues" evidence="2">
    <location>
        <begin position="175"/>
        <end position="185"/>
    </location>
</feature>
<feature type="binding site" evidence="1">
    <location>
        <begin position="95"/>
        <end position="97"/>
    </location>
    <ligand>
        <name>substrate</name>
    </ligand>
</feature>
<feature type="binding site" evidence="1">
    <location>
        <position position="108"/>
    </location>
    <ligand>
        <name>substrate</name>
    </ligand>
</feature>
<feature type="binding site" evidence="1">
    <location>
        <begin position="112"/>
        <end position="114"/>
    </location>
    <ligand>
        <name>substrate</name>
    </ligand>
</feature>
<feature type="binding site" evidence="1">
    <location>
        <position position="122"/>
    </location>
    <ligand>
        <name>substrate</name>
    </ligand>
</feature>
<name>DUT_BARQU</name>
<evidence type="ECO:0000255" key="1">
    <source>
        <dbReference type="HAMAP-Rule" id="MF_00116"/>
    </source>
</evidence>
<evidence type="ECO:0000256" key="2">
    <source>
        <dbReference type="SAM" id="MobiDB-lite"/>
    </source>
</evidence>
<gene>
    <name evidence="1" type="primary">dut</name>
    <name type="ordered locus">BQ11670</name>
</gene>
<dbReference type="EC" id="3.6.1.23" evidence="1"/>
<dbReference type="EMBL" id="BX897700">
    <property type="protein sequence ID" value="CAF26626.1"/>
    <property type="molecule type" value="Genomic_DNA"/>
</dbReference>
<dbReference type="SMR" id="Q6FYR2"/>
<dbReference type="KEGG" id="bqu:BQ11670"/>
<dbReference type="eggNOG" id="COG0756">
    <property type="taxonomic scope" value="Bacteria"/>
</dbReference>
<dbReference type="HOGENOM" id="CLU_068508_1_0_5"/>
<dbReference type="OrthoDB" id="9809956at2"/>
<dbReference type="UniPathway" id="UPA00610">
    <property type="reaction ID" value="UER00666"/>
</dbReference>
<dbReference type="Proteomes" id="UP000000597">
    <property type="component" value="Chromosome"/>
</dbReference>
<dbReference type="GO" id="GO:0004170">
    <property type="term" value="F:dUTP diphosphatase activity"/>
    <property type="evidence" value="ECO:0007669"/>
    <property type="project" value="UniProtKB-UniRule"/>
</dbReference>
<dbReference type="GO" id="GO:0000287">
    <property type="term" value="F:magnesium ion binding"/>
    <property type="evidence" value="ECO:0007669"/>
    <property type="project" value="UniProtKB-UniRule"/>
</dbReference>
<dbReference type="GO" id="GO:0006226">
    <property type="term" value="P:dUMP biosynthetic process"/>
    <property type="evidence" value="ECO:0007669"/>
    <property type="project" value="UniProtKB-UniRule"/>
</dbReference>
<dbReference type="GO" id="GO:0046081">
    <property type="term" value="P:dUTP catabolic process"/>
    <property type="evidence" value="ECO:0007669"/>
    <property type="project" value="InterPro"/>
</dbReference>
<dbReference type="CDD" id="cd07557">
    <property type="entry name" value="trimeric_dUTPase"/>
    <property type="match status" value="1"/>
</dbReference>
<dbReference type="Gene3D" id="2.70.40.10">
    <property type="match status" value="1"/>
</dbReference>
<dbReference type="HAMAP" id="MF_00116">
    <property type="entry name" value="dUTPase_bact"/>
    <property type="match status" value="1"/>
</dbReference>
<dbReference type="InterPro" id="IPR008181">
    <property type="entry name" value="dUTPase"/>
</dbReference>
<dbReference type="InterPro" id="IPR029054">
    <property type="entry name" value="dUTPase-like"/>
</dbReference>
<dbReference type="InterPro" id="IPR036157">
    <property type="entry name" value="dUTPase-like_sf"/>
</dbReference>
<dbReference type="InterPro" id="IPR033704">
    <property type="entry name" value="dUTPase_trimeric"/>
</dbReference>
<dbReference type="NCBIfam" id="TIGR00576">
    <property type="entry name" value="dut"/>
    <property type="match status" value="1"/>
</dbReference>
<dbReference type="NCBIfam" id="NF001862">
    <property type="entry name" value="PRK00601.1"/>
    <property type="match status" value="1"/>
</dbReference>
<dbReference type="PANTHER" id="PTHR11241">
    <property type="entry name" value="DEOXYURIDINE 5'-TRIPHOSPHATE NUCLEOTIDOHYDROLASE"/>
    <property type="match status" value="1"/>
</dbReference>
<dbReference type="PANTHER" id="PTHR11241:SF0">
    <property type="entry name" value="DEOXYURIDINE 5'-TRIPHOSPHATE NUCLEOTIDOHYDROLASE"/>
    <property type="match status" value="1"/>
</dbReference>
<dbReference type="Pfam" id="PF00692">
    <property type="entry name" value="dUTPase"/>
    <property type="match status" value="1"/>
</dbReference>
<dbReference type="SUPFAM" id="SSF51283">
    <property type="entry name" value="dUTPase-like"/>
    <property type="match status" value="1"/>
</dbReference>
<reference key="1">
    <citation type="journal article" date="2004" name="Proc. Natl. Acad. Sci. U.S.A.">
        <title>The louse-borne human pathogen Bartonella quintana is a genomic derivative of the zoonotic agent Bartonella henselae.</title>
        <authorList>
            <person name="Alsmark U.C.M."/>
            <person name="Frank A.C."/>
            <person name="Karlberg E.O."/>
            <person name="Legault B.-A."/>
            <person name="Ardell D.H."/>
            <person name="Canbaeck B."/>
            <person name="Eriksson A.-S."/>
            <person name="Naeslund A.K."/>
            <person name="Handley S.A."/>
            <person name="Huvet M."/>
            <person name="La Scola B."/>
            <person name="Holmberg M."/>
            <person name="Andersson S.G.E."/>
        </authorList>
    </citation>
    <scope>NUCLEOTIDE SEQUENCE [LARGE SCALE GENOMIC DNA]</scope>
    <source>
        <strain>Toulouse</strain>
    </source>
</reference>